<accession>Q9M2S7</accession>
<feature type="initiator methionine" description="Removed" evidence="5">
    <location>
        <position position="1"/>
    </location>
</feature>
<feature type="chain" id="PRO_0000416134" description="Peptidyl-prolyl cis-trans isomerase FKBP20-1">
    <location>
        <begin position="2"/>
        <end position="190"/>
    </location>
</feature>
<feature type="domain" description="PPIase FKBP-type" evidence="2">
    <location>
        <begin position="32"/>
        <end position="121"/>
    </location>
</feature>
<feature type="region of interest" description="Disordered" evidence="3">
    <location>
        <begin position="149"/>
        <end position="190"/>
    </location>
</feature>
<feature type="compositionally biased region" description="Basic and acidic residues" evidence="3">
    <location>
        <begin position="149"/>
        <end position="163"/>
    </location>
</feature>
<feature type="compositionally biased region" description="Basic residues" evidence="3">
    <location>
        <begin position="179"/>
        <end position="190"/>
    </location>
</feature>
<feature type="modified residue" description="N-acetylglycine" evidence="5">
    <location>
        <position position="2"/>
    </location>
</feature>
<protein>
    <recommendedName>
        <fullName>Peptidyl-prolyl cis-trans isomerase FKBP20-1</fullName>
        <shortName>PPIase FKBP20-1</shortName>
        <ecNumber>5.2.1.8</ecNumber>
    </recommendedName>
    <alternativeName>
        <fullName>FK506-binding protein 20-1</fullName>
        <shortName>AtFKBP20-1</shortName>
    </alternativeName>
    <alternativeName>
        <fullName>Immunophilin FKBP20-1</fullName>
    </alternativeName>
    <alternativeName>
        <fullName>Rotamase</fullName>
    </alternativeName>
</protein>
<comment type="function">
    <text evidence="1">PPIases accelerate the folding of proteins. It catalyzes the cis-trans isomerization of proline imidic peptide bonds in oligopeptides (By similarity).</text>
</comment>
<comment type="catalytic activity">
    <reaction>
        <text>[protein]-peptidylproline (omega=180) = [protein]-peptidylproline (omega=0)</text>
        <dbReference type="Rhea" id="RHEA:16237"/>
        <dbReference type="Rhea" id="RHEA-COMP:10747"/>
        <dbReference type="Rhea" id="RHEA-COMP:10748"/>
        <dbReference type="ChEBI" id="CHEBI:83833"/>
        <dbReference type="ChEBI" id="CHEBI:83834"/>
        <dbReference type="EC" id="5.2.1.8"/>
    </reaction>
</comment>
<comment type="similarity">
    <text evidence="4">Belongs to the FKBP-type PPIase family.</text>
</comment>
<gene>
    <name type="primary">FKBP20-1</name>
    <name type="synonym">FKBP20</name>
    <name type="ordered locus">At3g55520</name>
    <name type="ORF">T22E16.180</name>
</gene>
<dbReference type="EC" id="5.2.1.8"/>
<dbReference type="EMBL" id="AL132975">
    <property type="protein sequence ID" value="CAB75910.1"/>
    <property type="molecule type" value="Genomic_DNA"/>
</dbReference>
<dbReference type="EMBL" id="CP002686">
    <property type="protein sequence ID" value="AEE79396.1"/>
    <property type="molecule type" value="Genomic_DNA"/>
</dbReference>
<dbReference type="EMBL" id="CP002686">
    <property type="protein sequence ID" value="ANM65896.1"/>
    <property type="molecule type" value="Genomic_DNA"/>
</dbReference>
<dbReference type="EMBL" id="CP002686">
    <property type="protein sequence ID" value="ANM65897.1"/>
    <property type="molecule type" value="Genomic_DNA"/>
</dbReference>
<dbReference type="EMBL" id="AY065308">
    <property type="protein sequence ID" value="AAL38784.1"/>
    <property type="molecule type" value="mRNA"/>
</dbReference>
<dbReference type="EMBL" id="AY091314">
    <property type="protein sequence ID" value="AAM14253.1"/>
    <property type="molecule type" value="mRNA"/>
</dbReference>
<dbReference type="EMBL" id="AY085181">
    <property type="protein sequence ID" value="AAM61732.1"/>
    <property type="molecule type" value="mRNA"/>
</dbReference>
<dbReference type="PIR" id="T47691">
    <property type="entry name" value="T47691"/>
</dbReference>
<dbReference type="RefSeq" id="NP_001327833.1">
    <property type="nucleotide sequence ID" value="NM_001339734.1"/>
</dbReference>
<dbReference type="RefSeq" id="NP_001327834.1">
    <property type="nucleotide sequence ID" value="NM_001339733.1"/>
</dbReference>
<dbReference type="RefSeq" id="NP_191111.1">
    <property type="nucleotide sequence ID" value="NM_115409.3"/>
</dbReference>
<dbReference type="SMR" id="Q9M2S7"/>
<dbReference type="BioGRID" id="10033">
    <property type="interactions" value="4"/>
</dbReference>
<dbReference type="FunCoup" id="Q9M2S7">
    <property type="interactions" value="80"/>
</dbReference>
<dbReference type="IntAct" id="Q9M2S7">
    <property type="interactions" value="2"/>
</dbReference>
<dbReference type="STRING" id="3702.Q9M2S7"/>
<dbReference type="iPTMnet" id="Q9M2S7"/>
<dbReference type="PaxDb" id="3702-AT3G55520.1"/>
<dbReference type="ProteomicsDB" id="228925"/>
<dbReference type="EnsemblPlants" id="AT3G55520.1">
    <property type="protein sequence ID" value="AT3G55520.1"/>
    <property type="gene ID" value="AT3G55520"/>
</dbReference>
<dbReference type="EnsemblPlants" id="AT3G55520.2">
    <property type="protein sequence ID" value="AT3G55520.2"/>
    <property type="gene ID" value="AT3G55520"/>
</dbReference>
<dbReference type="EnsemblPlants" id="AT3G55520.3">
    <property type="protein sequence ID" value="AT3G55520.3"/>
    <property type="gene ID" value="AT3G55520"/>
</dbReference>
<dbReference type="GeneID" id="824717"/>
<dbReference type="Gramene" id="AT3G55520.1">
    <property type="protein sequence ID" value="AT3G55520.1"/>
    <property type="gene ID" value="AT3G55520"/>
</dbReference>
<dbReference type="Gramene" id="AT3G55520.2">
    <property type="protein sequence ID" value="AT3G55520.2"/>
    <property type="gene ID" value="AT3G55520"/>
</dbReference>
<dbReference type="Gramene" id="AT3G55520.3">
    <property type="protein sequence ID" value="AT3G55520.3"/>
    <property type="gene ID" value="AT3G55520"/>
</dbReference>
<dbReference type="KEGG" id="ath:AT3G55520"/>
<dbReference type="Araport" id="AT3G55520"/>
<dbReference type="TAIR" id="AT3G55520"/>
<dbReference type="eggNOG" id="KOG0543">
    <property type="taxonomic scope" value="Eukaryota"/>
</dbReference>
<dbReference type="HOGENOM" id="CLU_013615_11_1_1"/>
<dbReference type="InParanoid" id="Q9M2S7"/>
<dbReference type="OMA" id="IVRHAKP"/>
<dbReference type="OrthoDB" id="433738at2759"/>
<dbReference type="PhylomeDB" id="Q9M2S7"/>
<dbReference type="PRO" id="PR:Q9M2S7"/>
<dbReference type="Proteomes" id="UP000006548">
    <property type="component" value="Chromosome 3"/>
</dbReference>
<dbReference type="ExpressionAtlas" id="Q9M2S7">
    <property type="expression patterns" value="baseline and differential"/>
</dbReference>
<dbReference type="GO" id="GO:0005829">
    <property type="term" value="C:cytosol"/>
    <property type="evidence" value="ECO:0007005"/>
    <property type="project" value="TAIR"/>
</dbReference>
<dbReference type="GO" id="GO:0003755">
    <property type="term" value="F:peptidyl-prolyl cis-trans isomerase activity"/>
    <property type="evidence" value="ECO:0007669"/>
    <property type="project" value="UniProtKB-KW"/>
</dbReference>
<dbReference type="FunFam" id="3.10.50.40:FF:000028">
    <property type="entry name" value="Peptidylprolyl isomerase"/>
    <property type="match status" value="1"/>
</dbReference>
<dbReference type="Gene3D" id="3.10.50.40">
    <property type="match status" value="1"/>
</dbReference>
<dbReference type="InterPro" id="IPR050689">
    <property type="entry name" value="FKBP-type_PPIase"/>
</dbReference>
<dbReference type="InterPro" id="IPR046357">
    <property type="entry name" value="PPIase_dom_sf"/>
</dbReference>
<dbReference type="InterPro" id="IPR001179">
    <property type="entry name" value="PPIase_FKBP_dom"/>
</dbReference>
<dbReference type="PANTHER" id="PTHR10516">
    <property type="entry name" value="PEPTIDYL-PROLYL CIS-TRANS ISOMERASE"/>
    <property type="match status" value="1"/>
</dbReference>
<dbReference type="PANTHER" id="PTHR10516:SF412">
    <property type="entry name" value="PEPTIDYL-PROLYL CIS-TRANS ISOMERASE FKBP20-1"/>
    <property type="match status" value="1"/>
</dbReference>
<dbReference type="Pfam" id="PF00254">
    <property type="entry name" value="FKBP_C"/>
    <property type="match status" value="1"/>
</dbReference>
<dbReference type="SUPFAM" id="SSF54534">
    <property type="entry name" value="FKBP-like"/>
    <property type="match status" value="1"/>
</dbReference>
<dbReference type="PROSITE" id="PS50059">
    <property type="entry name" value="FKBP_PPIASE"/>
    <property type="match status" value="1"/>
</dbReference>
<evidence type="ECO:0000250" key="1"/>
<evidence type="ECO:0000255" key="2">
    <source>
        <dbReference type="PROSITE-ProRule" id="PRU00277"/>
    </source>
</evidence>
<evidence type="ECO:0000256" key="3">
    <source>
        <dbReference type="SAM" id="MobiDB-lite"/>
    </source>
</evidence>
<evidence type="ECO:0000305" key="4"/>
<evidence type="ECO:0007744" key="5">
    <source>
    </source>
</evidence>
<organism>
    <name type="scientific">Arabidopsis thaliana</name>
    <name type="common">Mouse-ear cress</name>
    <dbReference type="NCBI Taxonomy" id="3702"/>
    <lineage>
        <taxon>Eukaryota</taxon>
        <taxon>Viridiplantae</taxon>
        <taxon>Streptophyta</taxon>
        <taxon>Embryophyta</taxon>
        <taxon>Tracheophyta</taxon>
        <taxon>Spermatophyta</taxon>
        <taxon>Magnoliopsida</taxon>
        <taxon>eudicotyledons</taxon>
        <taxon>Gunneridae</taxon>
        <taxon>Pentapetalae</taxon>
        <taxon>rosids</taxon>
        <taxon>malvids</taxon>
        <taxon>Brassicales</taxon>
        <taxon>Brassicaceae</taxon>
        <taxon>Camelineae</taxon>
        <taxon>Arabidopsis</taxon>
    </lineage>
</organism>
<reference key="1">
    <citation type="journal article" date="2000" name="Nature">
        <title>Sequence and analysis of chromosome 3 of the plant Arabidopsis thaliana.</title>
        <authorList>
            <person name="Salanoubat M."/>
            <person name="Lemcke K."/>
            <person name="Rieger M."/>
            <person name="Ansorge W."/>
            <person name="Unseld M."/>
            <person name="Fartmann B."/>
            <person name="Valle G."/>
            <person name="Bloecker H."/>
            <person name="Perez-Alonso M."/>
            <person name="Obermaier B."/>
            <person name="Delseny M."/>
            <person name="Boutry M."/>
            <person name="Grivell L.A."/>
            <person name="Mache R."/>
            <person name="Puigdomenech P."/>
            <person name="De Simone V."/>
            <person name="Choisne N."/>
            <person name="Artiguenave F."/>
            <person name="Robert C."/>
            <person name="Brottier P."/>
            <person name="Wincker P."/>
            <person name="Cattolico L."/>
            <person name="Weissenbach J."/>
            <person name="Saurin W."/>
            <person name="Quetier F."/>
            <person name="Schaefer M."/>
            <person name="Mueller-Auer S."/>
            <person name="Gabel C."/>
            <person name="Fuchs M."/>
            <person name="Benes V."/>
            <person name="Wurmbach E."/>
            <person name="Drzonek H."/>
            <person name="Erfle H."/>
            <person name="Jordan N."/>
            <person name="Bangert S."/>
            <person name="Wiedelmann R."/>
            <person name="Kranz H."/>
            <person name="Voss H."/>
            <person name="Holland R."/>
            <person name="Brandt P."/>
            <person name="Nyakatura G."/>
            <person name="Vezzi A."/>
            <person name="D'Angelo M."/>
            <person name="Pallavicini A."/>
            <person name="Toppo S."/>
            <person name="Simionati B."/>
            <person name="Conrad A."/>
            <person name="Hornischer K."/>
            <person name="Kauer G."/>
            <person name="Loehnert T.-H."/>
            <person name="Nordsiek G."/>
            <person name="Reichelt J."/>
            <person name="Scharfe M."/>
            <person name="Schoen O."/>
            <person name="Bargues M."/>
            <person name="Terol J."/>
            <person name="Climent J."/>
            <person name="Navarro P."/>
            <person name="Collado C."/>
            <person name="Perez-Perez A."/>
            <person name="Ottenwaelder B."/>
            <person name="Duchemin D."/>
            <person name="Cooke R."/>
            <person name="Laudie M."/>
            <person name="Berger-Llauro C."/>
            <person name="Purnelle B."/>
            <person name="Masuy D."/>
            <person name="de Haan M."/>
            <person name="Maarse A.C."/>
            <person name="Alcaraz J.-P."/>
            <person name="Cottet A."/>
            <person name="Casacuberta E."/>
            <person name="Monfort A."/>
            <person name="Argiriou A."/>
            <person name="Flores M."/>
            <person name="Liguori R."/>
            <person name="Vitale D."/>
            <person name="Mannhaupt G."/>
            <person name="Haase D."/>
            <person name="Schoof H."/>
            <person name="Rudd S."/>
            <person name="Zaccaria P."/>
            <person name="Mewes H.-W."/>
            <person name="Mayer K.F.X."/>
            <person name="Kaul S."/>
            <person name="Town C.D."/>
            <person name="Koo H.L."/>
            <person name="Tallon L.J."/>
            <person name="Jenkins J."/>
            <person name="Rooney T."/>
            <person name="Rizzo M."/>
            <person name="Walts A."/>
            <person name="Utterback T."/>
            <person name="Fujii C.Y."/>
            <person name="Shea T.P."/>
            <person name="Creasy T.H."/>
            <person name="Haas B."/>
            <person name="Maiti R."/>
            <person name="Wu D."/>
            <person name="Peterson J."/>
            <person name="Van Aken S."/>
            <person name="Pai G."/>
            <person name="Militscher J."/>
            <person name="Sellers P."/>
            <person name="Gill J.E."/>
            <person name="Feldblyum T.V."/>
            <person name="Preuss D."/>
            <person name="Lin X."/>
            <person name="Nierman W.C."/>
            <person name="Salzberg S.L."/>
            <person name="White O."/>
            <person name="Venter J.C."/>
            <person name="Fraser C.M."/>
            <person name="Kaneko T."/>
            <person name="Nakamura Y."/>
            <person name="Sato S."/>
            <person name="Kato T."/>
            <person name="Asamizu E."/>
            <person name="Sasamoto S."/>
            <person name="Kimura T."/>
            <person name="Idesawa K."/>
            <person name="Kawashima K."/>
            <person name="Kishida Y."/>
            <person name="Kiyokawa C."/>
            <person name="Kohara M."/>
            <person name="Matsumoto M."/>
            <person name="Matsuno A."/>
            <person name="Muraki A."/>
            <person name="Nakayama S."/>
            <person name="Nakazaki N."/>
            <person name="Shinpo S."/>
            <person name="Takeuchi C."/>
            <person name="Wada T."/>
            <person name="Watanabe A."/>
            <person name="Yamada M."/>
            <person name="Yasuda M."/>
            <person name="Tabata S."/>
        </authorList>
    </citation>
    <scope>NUCLEOTIDE SEQUENCE [LARGE SCALE GENOMIC DNA]</scope>
    <source>
        <strain>cv. Columbia</strain>
    </source>
</reference>
<reference key="2">
    <citation type="journal article" date="2017" name="Plant J.">
        <title>Araport11: a complete reannotation of the Arabidopsis thaliana reference genome.</title>
        <authorList>
            <person name="Cheng C.Y."/>
            <person name="Krishnakumar V."/>
            <person name="Chan A.P."/>
            <person name="Thibaud-Nissen F."/>
            <person name="Schobel S."/>
            <person name="Town C.D."/>
        </authorList>
    </citation>
    <scope>GENOME REANNOTATION</scope>
    <source>
        <strain>cv. Columbia</strain>
    </source>
</reference>
<reference key="3">
    <citation type="journal article" date="2003" name="Science">
        <title>Empirical analysis of transcriptional activity in the Arabidopsis genome.</title>
        <authorList>
            <person name="Yamada K."/>
            <person name="Lim J."/>
            <person name="Dale J.M."/>
            <person name="Chen H."/>
            <person name="Shinn P."/>
            <person name="Palm C.J."/>
            <person name="Southwick A.M."/>
            <person name="Wu H.C."/>
            <person name="Kim C.J."/>
            <person name="Nguyen M."/>
            <person name="Pham P.K."/>
            <person name="Cheuk R.F."/>
            <person name="Karlin-Newmann G."/>
            <person name="Liu S.X."/>
            <person name="Lam B."/>
            <person name="Sakano H."/>
            <person name="Wu T."/>
            <person name="Yu G."/>
            <person name="Miranda M."/>
            <person name="Quach H.L."/>
            <person name="Tripp M."/>
            <person name="Chang C.H."/>
            <person name="Lee J.M."/>
            <person name="Toriumi M.J."/>
            <person name="Chan M.M."/>
            <person name="Tang C.C."/>
            <person name="Onodera C.S."/>
            <person name="Deng J.M."/>
            <person name="Akiyama K."/>
            <person name="Ansari Y."/>
            <person name="Arakawa T."/>
            <person name="Banh J."/>
            <person name="Banno F."/>
            <person name="Bowser L."/>
            <person name="Brooks S.Y."/>
            <person name="Carninci P."/>
            <person name="Chao Q."/>
            <person name="Choy N."/>
            <person name="Enju A."/>
            <person name="Goldsmith A.D."/>
            <person name="Gurjal M."/>
            <person name="Hansen N.F."/>
            <person name="Hayashizaki Y."/>
            <person name="Johnson-Hopson C."/>
            <person name="Hsuan V.W."/>
            <person name="Iida K."/>
            <person name="Karnes M."/>
            <person name="Khan S."/>
            <person name="Koesema E."/>
            <person name="Ishida J."/>
            <person name="Jiang P.X."/>
            <person name="Jones T."/>
            <person name="Kawai J."/>
            <person name="Kamiya A."/>
            <person name="Meyers C."/>
            <person name="Nakajima M."/>
            <person name="Narusaka M."/>
            <person name="Seki M."/>
            <person name="Sakurai T."/>
            <person name="Satou M."/>
            <person name="Tamse R."/>
            <person name="Vaysberg M."/>
            <person name="Wallender E.K."/>
            <person name="Wong C."/>
            <person name="Yamamura Y."/>
            <person name="Yuan S."/>
            <person name="Shinozaki K."/>
            <person name="Davis R.W."/>
            <person name="Theologis A."/>
            <person name="Ecker J.R."/>
        </authorList>
    </citation>
    <scope>NUCLEOTIDE SEQUENCE [LARGE SCALE MRNA]</scope>
    <source>
        <strain>cv. Columbia</strain>
    </source>
</reference>
<reference key="4">
    <citation type="submission" date="2002-03" db="EMBL/GenBank/DDBJ databases">
        <title>Full-length cDNA from Arabidopsis thaliana.</title>
        <authorList>
            <person name="Brover V.V."/>
            <person name="Troukhan M.E."/>
            <person name="Alexandrov N.A."/>
            <person name="Lu Y.-P."/>
            <person name="Flavell R.B."/>
            <person name="Feldmann K.A."/>
        </authorList>
    </citation>
    <scope>NUCLEOTIDE SEQUENCE [LARGE SCALE MRNA]</scope>
</reference>
<reference key="5">
    <citation type="journal article" date="2004" name="Plant Physiol.">
        <title>Immunophilins and parvulins. Superfamily of peptidyl prolyl isomerases in Arabidopsis.</title>
        <authorList>
            <person name="He Z."/>
            <person name="Li L."/>
            <person name="Luan S."/>
        </authorList>
    </citation>
    <scope>GENE FAMILY</scope>
    <scope>NOMENCLATURE</scope>
</reference>
<reference key="6">
    <citation type="journal article" date="2012" name="Mol. Cell. Proteomics">
        <title>Comparative large-scale characterisation of plant vs. mammal proteins reveals similar and idiosyncratic N-alpha acetylation features.</title>
        <authorList>
            <person name="Bienvenut W.V."/>
            <person name="Sumpton D."/>
            <person name="Martinez A."/>
            <person name="Lilla S."/>
            <person name="Espagne C."/>
            <person name="Meinnel T."/>
            <person name="Giglione C."/>
        </authorList>
    </citation>
    <scope>ACETYLATION [LARGE SCALE ANALYSIS] AT GLY-2</scope>
    <scope>CLEAVAGE OF INITIATOR METHIONINE [LARGE SCALE ANALYSIS]</scope>
    <scope>IDENTIFICATION BY MASS SPECTROMETRY [LARGE SCALE ANALYSIS]</scope>
</reference>
<sequence>MGDAIDLSGDGGVLKKIVRSAKPDAISPSDDLPVVDVHYEGILAEDEKVFDTTREDNLVFSFELGTGSVIRSWDIALKTMKVGEVAKITCKPEYAYGRAGSPPDIPPDATLIFEVELVACRPRKGASVGSVSEERARLEDLKKQREIAAAAKEDDKKKREEAKAAAAARIQAKLDAKKGPGKGKGKGKAK</sequence>
<name>FK201_ARATH</name>
<keyword id="KW-0007">Acetylation</keyword>
<keyword id="KW-0413">Isomerase</keyword>
<keyword id="KW-1185">Reference proteome</keyword>
<keyword id="KW-0697">Rotamase</keyword>
<proteinExistence type="evidence at protein level"/>